<dbReference type="EC" id="6.1.1.15" evidence="1"/>
<dbReference type="EMBL" id="CP000867">
    <property type="protein sequence ID" value="ABX01011.1"/>
    <property type="molecule type" value="Genomic_DNA"/>
</dbReference>
<dbReference type="SMR" id="A9A787"/>
<dbReference type="STRING" id="444158.MmarC6_0188"/>
<dbReference type="KEGG" id="mmx:MmarC6_0188"/>
<dbReference type="eggNOG" id="arCOG00402">
    <property type="taxonomic scope" value="Archaea"/>
</dbReference>
<dbReference type="HOGENOM" id="CLU_001882_4_2_2"/>
<dbReference type="OrthoDB" id="7375at2157"/>
<dbReference type="PhylomeDB" id="A9A787"/>
<dbReference type="GO" id="GO:0017101">
    <property type="term" value="C:aminoacyl-tRNA synthetase multienzyme complex"/>
    <property type="evidence" value="ECO:0007669"/>
    <property type="project" value="TreeGrafter"/>
</dbReference>
<dbReference type="GO" id="GO:0005737">
    <property type="term" value="C:cytoplasm"/>
    <property type="evidence" value="ECO:0007669"/>
    <property type="project" value="UniProtKB-SubCell"/>
</dbReference>
<dbReference type="GO" id="GO:0005524">
    <property type="term" value="F:ATP binding"/>
    <property type="evidence" value="ECO:0007669"/>
    <property type="project" value="UniProtKB-UniRule"/>
</dbReference>
<dbReference type="GO" id="GO:0004827">
    <property type="term" value="F:proline-tRNA ligase activity"/>
    <property type="evidence" value="ECO:0007669"/>
    <property type="project" value="UniProtKB-UniRule"/>
</dbReference>
<dbReference type="GO" id="GO:0006433">
    <property type="term" value="P:prolyl-tRNA aminoacylation"/>
    <property type="evidence" value="ECO:0007669"/>
    <property type="project" value="UniProtKB-UniRule"/>
</dbReference>
<dbReference type="CDD" id="cd00778">
    <property type="entry name" value="ProRS_core_arch_euk"/>
    <property type="match status" value="1"/>
</dbReference>
<dbReference type="FunFam" id="3.30.930.10:FF:000037">
    <property type="entry name" value="Proline--tRNA ligase"/>
    <property type="match status" value="1"/>
</dbReference>
<dbReference type="Gene3D" id="3.40.50.800">
    <property type="entry name" value="Anticodon-binding domain"/>
    <property type="match status" value="1"/>
</dbReference>
<dbReference type="Gene3D" id="3.30.930.10">
    <property type="entry name" value="Bira Bifunctional Protein, Domain 2"/>
    <property type="match status" value="1"/>
</dbReference>
<dbReference type="Gene3D" id="3.30.110.30">
    <property type="entry name" value="C-terminal domain of ProRS"/>
    <property type="match status" value="1"/>
</dbReference>
<dbReference type="HAMAP" id="MF_01571">
    <property type="entry name" value="Pro_tRNA_synth_type3"/>
    <property type="match status" value="1"/>
</dbReference>
<dbReference type="InterPro" id="IPR002314">
    <property type="entry name" value="aa-tRNA-synt_IIb"/>
</dbReference>
<dbReference type="InterPro" id="IPR006195">
    <property type="entry name" value="aa-tRNA-synth_II"/>
</dbReference>
<dbReference type="InterPro" id="IPR045864">
    <property type="entry name" value="aa-tRNA-synth_II/BPL/LPL"/>
</dbReference>
<dbReference type="InterPro" id="IPR004154">
    <property type="entry name" value="Anticodon-bd"/>
</dbReference>
<dbReference type="InterPro" id="IPR036621">
    <property type="entry name" value="Anticodon-bd_dom_sf"/>
</dbReference>
<dbReference type="InterPro" id="IPR002316">
    <property type="entry name" value="Pro-tRNA-ligase_IIa"/>
</dbReference>
<dbReference type="InterPro" id="IPR004499">
    <property type="entry name" value="Pro-tRNA-ligase_IIa_arc-type"/>
</dbReference>
<dbReference type="InterPro" id="IPR017449">
    <property type="entry name" value="Pro-tRNA_synth_II"/>
</dbReference>
<dbReference type="InterPro" id="IPR015264">
    <property type="entry name" value="Pro-tRNA_synth_II_arc"/>
</dbReference>
<dbReference type="InterPro" id="IPR033721">
    <property type="entry name" value="ProRS_core_arch_euk"/>
</dbReference>
<dbReference type="NCBIfam" id="TIGR00408">
    <property type="entry name" value="proS_fam_I"/>
    <property type="match status" value="1"/>
</dbReference>
<dbReference type="PANTHER" id="PTHR43382:SF2">
    <property type="entry name" value="BIFUNCTIONAL GLUTAMATE_PROLINE--TRNA LIGASE"/>
    <property type="match status" value="1"/>
</dbReference>
<dbReference type="PANTHER" id="PTHR43382">
    <property type="entry name" value="PROLYL-TRNA SYNTHETASE"/>
    <property type="match status" value="1"/>
</dbReference>
<dbReference type="Pfam" id="PF03129">
    <property type="entry name" value="HGTP_anticodon"/>
    <property type="match status" value="1"/>
</dbReference>
<dbReference type="Pfam" id="PF09181">
    <property type="entry name" value="ProRS-C_2"/>
    <property type="match status" value="1"/>
</dbReference>
<dbReference type="Pfam" id="PF00587">
    <property type="entry name" value="tRNA-synt_2b"/>
    <property type="match status" value="1"/>
</dbReference>
<dbReference type="PRINTS" id="PR01046">
    <property type="entry name" value="TRNASYNTHPRO"/>
</dbReference>
<dbReference type="SUPFAM" id="SSF64586">
    <property type="entry name" value="C-terminal domain of ProRS"/>
    <property type="match status" value="1"/>
</dbReference>
<dbReference type="SUPFAM" id="SSF52954">
    <property type="entry name" value="Class II aaRS ABD-related"/>
    <property type="match status" value="1"/>
</dbReference>
<dbReference type="SUPFAM" id="SSF55681">
    <property type="entry name" value="Class II aaRS and biotin synthetases"/>
    <property type="match status" value="1"/>
</dbReference>
<dbReference type="PROSITE" id="PS50862">
    <property type="entry name" value="AA_TRNA_LIGASE_II"/>
    <property type="match status" value="1"/>
</dbReference>
<accession>A9A787</accession>
<keyword id="KW-0030">Aminoacyl-tRNA synthetase</keyword>
<keyword id="KW-0067">ATP-binding</keyword>
<keyword id="KW-0963">Cytoplasm</keyword>
<keyword id="KW-0436">Ligase</keyword>
<keyword id="KW-0547">Nucleotide-binding</keyword>
<keyword id="KW-0648">Protein biosynthesis</keyword>
<comment type="function">
    <text evidence="1">Catalyzes the attachment of proline to tRNA(Pro) in a two-step reaction: proline is first activated by ATP to form Pro-AMP and then transferred to the acceptor end of tRNA(Pro).</text>
</comment>
<comment type="catalytic activity">
    <reaction evidence="1">
        <text>tRNA(Pro) + L-proline + ATP = L-prolyl-tRNA(Pro) + AMP + diphosphate</text>
        <dbReference type="Rhea" id="RHEA:14305"/>
        <dbReference type="Rhea" id="RHEA-COMP:9700"/>
        <dbReference type="Rhea" id="RHEA-COMP:9702"/>
        <dbReference type="ChEBI" id="CHEBI:30616"/>
        <dbReference type="ChEBI" id="CHEBI:33019"/>
        <dbReference type="ChEBI" id="CHEBI:60039"/>
        <dbReference type="ChEBI" id="CHEBI:78442"/>
        <dbReference type="ChEBI" id="CHEBI:78532"/>
        <dbReference type="ChEBI" id="CHEBI:456215"/>
        <dbReference type="EC" id="6.1.1.15"/>
    </reaction>
</comment>
<comment type="subunit">
    <text evidence="1">Homodimer.</text>
</comment>
<comment type="subcellular location">
    <subcellularLocation>
        <location evidence="1">Cytoplasm</location>
    </subcellularLocation>
</comment>
<comment type="domain">
    <text evidence="1">Consists of three domains: the N-terminal catalytic domain, the anticodon-binding domain and the C-terminal extension.</text>
</comment>
<comment type="similarity">
    <text evidence="1">Belongs to the class-II aminoacyl-tRNA synthetase family. ProS type 3 subfamily.</text>
</comment>
<reference key="1">
    <citation type="submission" date="2007-10" db="EMBL/GenBank/DDBJ databases">
        <title>Complete sequence of Methanococcus maripaludis C6.</title>
        <authorList>
            <consortium name="US DOE Joint Genome Institute"/>
            <person name="Copeland A."/>
            <person name="Lucas S."/>
            <person name="Lapidus A."/>
            <person name="Barry K."/>
            <person name="Glavina del Rio T."/>
            <person name="Dalin E."/>
            <person name="Tice H."/>
            <person name="Pitluck S."/>
            <person name="Clum A."/>
            <person name="Schmutz J."/>
            <person name="Larimer F."/>
            <person name="Land M."/>
            <person name="Hauser L."/>
            <person name="Kyrpides N."/>
            <person name="Mikhailova N."/>
            <person name="Sieprawska-Lupa M."/>
            <person name="Whitman W.B."/>
            <person name="Richardson P."/>
        </authorList>
    </citation>
    <scope>NUCLEOTIDE SEQUENCE [LARGE SCALE GENOMIC DNA]</scope>
    <source>
        <strain>C6 / ATCC BAA-1332</strain>
    </source>
</reference>
<feature type="chain" id="PRO_1000215566" description="Proline--tRNA ligase">
    <location>
        <begin position="1"/>
        <end position="460"/>
    </location>
</feature>
<name>SYP_METM6</name>
<sequence>MEFSEWYSDILEKAGIYDLRYPIKGCGVYLPYGFKIRRYSFEILRKLLDETNHDETLFPMLIPENLLAKEGEHIKGFEDEVFWVTHGGKTPLEVKLALRPTSETTMYYMMKQWIKVHTDLPMKLYQVVNTFRYETKHTRPLIRLREIMSFKEAHTAHATKEDCDAQITEALNLYGEFFDEICVPYIISKRPEWDKFPGADYTMAFDTIYPDGKTMQIGTVHNLGQNFAKTFELEFETPDGEKDFVYQTCYGISDRAIASLISVHGDEKGLVIPVDVAPIQIVLIPLLFKGKEEIVMDKIKELNRTLKSEFRVLLDDRDIRPGRKYNDWEIKGVPLRIELGPRDIENGQALIVRRDTGEKITVEYSNILEEVEKIVSMYKENLKIKADEKIKNFLTVVDFESDVNALSEKVKAALLENKGIILIPFDESVYNEEFEELIDASVLGQTTYEGKDYISVARTY</sequence>
<evidence type="ECO:0000255" key="1">
    <source>
        <dbReference type="HAMAP-Rule" id="MF_01571"/>
    </source>
</evidence>
<organism>
    <name type="scientific">Methanococcus maripaludis (strain C6 / ATCC BAA-1332)</name>
    <dbReference type="NCBI Taxonomy" id="444158"/>
    <lineage>
        <taxon>Archaea</taxon>
        <taxon>Methanobacteriati</taxon>
        <taxon>Methanobacteriota</taxon>
        <taxon>Methanomada group</taxon>
        <taxon>Methanococci</taxon>
        <taxon>Methanococcales</taxon>
        <taxon>Methanococcaceae</taxon>
        <taxon>Methanococcus</taxon>
    </lineage>
</organism>
<gene>
    <name evidence="1" type="primary">proS</name>
    <name type="ordered locus">MmarC6_0188</name>
</gene>
<protein>
    <recommendedName>
        <fullName evidence="1">Proline--tRNA ligase</fullName>
        <ecNumber evidence="1">6.1.1.15</ecNumber>
    </recommendedName>
    <alternativeName>
        <fullName evidence="1">Prolyl-tRNA synthetase</fullName>
        <shortName evidence="1">ProRS</shortName>
    </alternativeName>
</protein>
<proteinExistence type="inferred from homology"/>